<name>CA427_CONBU</name>
<feature type="propeptide" id="PRO_0000409979" evidence="1">
    <location>
        <begin position="1" status="less than"/>
        <end position="12"/>
    </location>
</feature>
<feature type="peptide" id="PRO_0000409980" description="Conotoxin Bu27" evidence="1">
    <location>
        <begin position="13"/>
        <end position="48"/>
    </location>
</feature>
<feature type="propeptide" id="PRO_0000409981" evidence="1">
    <location>
        <begin position="49"/>
        <end position="53"/>
    </location>
</feature>
<feature type="modified residue" description="4-hydroxyproline" evidence="1">
    <location>
        <position position="14"/>
    </location>
</feature>
<feature type="modified residue" description="4-carboxyglutamate" evidence="1">
    <location>
        <position position="15"/>
    </location>
</feature>
<feature type="modified residue" description="4-hydroxyproline" evidence="1">
    <location>
        <position position="29"/>
    </location>
</feature>
<feature type="modified residue" description="4-hydroxyproline" evidence="1">
    <location>
        <position position="34"/>
    </location>
</feature>
<feature type="modified residue" description="4-hydroxyproline" evidence="1">
    <location>
        <position position="35"/>
    </location>
</feature>
<feature type="modified residue" description="4-hydroxyproline" evidence="1">
    <location>
        <position position="43"/>
    </location>
</feature>
<feature type="modified residue" description="4-hydroxyproline" evidence="1">
    <location>
        <position position="44"/>
    </location>
</feature>
<feature type="modified residue" description="4-hydroxyproline" evidence="1">
    <location>
        <position position="48"/>
    </location>
</feature>
<feature type="modified residue" description="Proline amide" evidence="1">
    <location>
        <position position="48"/>
    </location>
</feature>
<feature type="glycosylation site" description="O-linked (HexNAc...) threonine" evidence="1">
    <location>
        <position position="19"/>
    </location>
</feature>
<feature type="glycosylation site" description="O-linked (HexNAc...) threonine" evidence="1">
    <location>
        <position position="21"/>
    </location>
</feature>
<feature type="non-terminal residue">
    <location>
        <position position="1"/>
    </location>
</feature>
<keyword id="KW-0027">Amidation</keyword>
<keyword id="KW-1015">Disulfide bond</keyword>
<keyword id="KW-0301">Gamma-carboxyglutamic acid</keyword>
<keyword id="KW-0325">Glycoprotein</keyword>
<keyword id="KW-0379">Hydroxylation</keyword>
<keyword id="KW-0872">Ion channel impairing toxin</keyword>
<keyword id="KW-0528">Neurotoxin</keyword>
<keyword id="KW-0964">Secreted</keyword>
<keyword id="KW-0800">Toxin</keyword>
<evidence type="ECO:0000250" key="1">
    <source>
        <dbReference type="UniProtKB" id="P0C1X1"/>
    </source>
</evidence>
<evidence type="ECO:0000250" key="2">
    <source>
        <dbReference type="UniProtKB" id="P0DQY7"/>
    </source>
</evidence>
<evidence type="ECO:0000303" key="3">
    <source>
    </source>
</evidence>
<evidence type="ECO:0000305" key="4"/>
<evidence type="ECO:0000305" key="5">
    <source>
    </source>
</evidence>
<accession>P0CY82</accession>
<organism>
    <name type="scientific">Conus bullatus</name>
    <name type="common">Bubble cone</name>
    <dbReference type="NCBI Taxonomy" id="89438"/>
    <lineage>
        <taxon>Eukaryota</taxon>
        <taxon>Metazoa</taxon>
        <taxon>Spiralia</taxon>
        <taxon>Lophotrochozoa</taxon>
        <taxon>Mollusca</taxon>
        <taxon>Gastropoda</taxon>
        <taxon>Caenogastropoda</taxon>
        <taxon>Neogastropoda</taxon>
        <taxon>Conoidea</taxon>
        <taxon>Conidae</taxon>
        <taxon>Conus</taxon>
        <taxon>Textilia</taxon>
    </lineage>
</organism>
<comment type="function">
    <text evidence="4">Probable neurotoxin with ion channel inhibitor activity.</text>
</comment>
<comment type="subcellular location">
    <subcellularLocation>
        <location evidence="5">Secreted</location>
    </subcellularLocation>
</comment>
<comment type="tissue specificity">
    <text evidence="5">Expressed by the venom duct.</text>
</comment>
<comment type="domain">
    <text evidence="4">The cysteine framework is IV (CC-C-C-C-C).</text>
</comment>
<comment type="PTM">
    <text evidence="2">Contains 3 disulfide bonds.</text>
</comment>
<comment type="similarity">
    <text evidence="4">Belongs to the conotoxin A superfamily.</text>
</comment>
<protein>
    <recommendedName>
        <fullName evidence="4">Conotoxin Bu27</fullName>
    </recommendedName>
    <alternativeName>
        <fullName evidence="3">KappaA-conotoxin Bu27</fullName>
    </alternativeName>
</protein>
<dbReference type="SMR" id="P0CY82"/>
<dbReference type="GO" id="GO:0005576">
    <property type="term" value="C:extracellular region"/>
    <property type="evidence" value="ECO:0007669"/>
    <property type="project" value="UniProtKB-SubCell"/>
</dbReference>
<dbReference type="GO" id="GO:0030550">
    <property type="term" value="F:acetylcholine receptor inhibitor activity"/>
    <property type="evidence" value="ECO:0007669"/>
    <property type="project" value="InterPro"/>
</dbReference>
<dbReference type="GO" id="GO:0099106">
    <property type="term" value="F:ion channel regulator activity"/>
    <property type="evidence" value="ECO:0007669"/>
    <property type="project" value="UniProtKB-KW"/>
</dbReference>
<dbReference type="GO" id="GO:0090729">
    <property type="term" value="F:toxin activity"/>
    <property type="evidence" value="ECO:0007669"/>
    <property type="project" value="UniProtKB-KW"/>
</dbReference>
<dbReference type="InterPro" id="IPR009958">
    <property type="entry name" value="Conotoxin_a-typ"/>
</dbReference>
<dbReference type="Pfam" id="PF07365">
    <property type="entry name" value="Toxin_8"/>
    <property type="match status" value="1"/>
</dbReference>
<sequence length="53" mass="5745">ASDGRNAVVHERAPELVVTATTTCCGYDPMTICPPCMCTHSCPPKRKPGRRND</sequence>
<reference key="1">
    <citation type="journal article" date="2011" name="BMC Genomics">
        <title>Characterization of the Conus bullatus genome and its venom-duct transcriptome.</title>
        <authorList>
            <person name="Hu H."/>
            <person name="Bandyopadhyay P.K."/>
            <person name="Olivera B.M."/>
            <person name="Yandell M."/>
        </authorList>
    </citation>
    <scope>NUCLEOTIDE SEQUENCE [MRNA]</scope>
    <source>
        <tissue>Venom duct</tissue>
    </source>
</reference>
<proteinExistence type="evidence at transcript level"/>